<reference key="1">
    <citation type="journal article" date="2007" name="Proc. Natl. Acad. Sci. U.S.A.">
        <title>The genome of Syntrophus aciditrophicus: life at the thermodynamic limit of microbial growth.</title>
        <authorList>
            <person name="McInerney M.J."/>
            <person name="Rohlin L."/>
            <person name="Mouttaki H."/>
            <person name="Kim U."/>
            <person name="Krupp R.S."/>
            <person name="Rios-Hernandez L."/>
            <person name="Sieber J."/>
            <person name="Struchtemeyer C.G."/>
            <person name="Bhattacharyya A."/>
            <person name="Campbell J.W."/>
            <person name="Gunsalus R.P."/>
        </authorList>
    </citation>
    <scope>NUCLEOTIDE SEQUENCE [LARGE SCALE GENOMIC DNA]</scope>
    <source>
        <strain>SB</strain>
    </source>
</reference>
<proteinExistence type="inferred from homology"/>
<keyword id="KW-0240">DNA-directed RNA polymerase</keyword>
<keyword id="KW-0548">Nucleotidyltransferase</keyword>
<keyword id="KW-1185">Reference proteome</keyword>
<keyword id="KW-0804">Transcription</keyword>
<keyword id="KW-0808">Transferase</keyword>
<evidence type="ECO:0000255" key="1">
    <source>
        <dbReference type="HAMAP-Rule" id="MF_00366"/>
    </source>
</evidence>
<gene>
    <name evidence="1" type="primary">rpoZ</name>
    <name type="ordered locus">SYNAS_02770</name>
    <name type="ORF">SYN_01280</name>
</gene>
<organism>
    <name type="scientific">Syntrophus aciditrophicus (strain SB)</name>
    <dbReference type="NCBI Taxonomy" id="56780"/>
    <lineage>
        <taxon>Bacteria</taxon>
        <taxon>Pseudomonadati</taxon>
        <taxon>Thermodesulfobacteriota</taxon>
        <taxon>Syntrophia</taxon>
        <taxon>Syntrophales</taxon>
        <taxon>Syntrophaceae</taxon>
        <taxon>Syntrophus</taxon>
    </lineage>
</organism>
<sequence>MARITVEDALKVAGNRFALVLLAVQRSKQLLRGARPLTNVRNNREIVAALREIADNKVYFSHPEYLMGAKEDFKLIADDTTEFIGDEDYVE</sequence>
<protein>
    <recommendedName>
        <fullName evidence="1">DNA-directed RNA polymerase subunit omega</fullName>
        <shortName evidence="1">RNAP omega subunit</shortName>
        <ecNumber evidence="1">2.7.7.6</ecNumber>
    </recommendedName>
    <alternativeName>
        <fullName evidence="1">RNA polymerase omega subunit</fullName>
    </alternativeName>
    <alternativeName>
        <fullName evidence="1">Transcriptase subunit omega</fullName>
    </alternativeName>
</protein>
<dbReference type="EC" id="2.7.7.6" evidence="1"/>
<dbReference type="EMBL" id="CP000252">
    <property type="protein sequence ID" value="ABC76156.1"/>
    <property type="molecule type" value="Genomic_DNA"/>
</dbReference>
<dbReference type="RefSeq" id="WP_011416190.1">
    <property type="nucleotide sequence ID" value="NC_007759.1"/>
</dbReference>
<dbReference type="SMR" id="Q2LQ83"/>
<dbReference type="FunCoup" id="Q2LQ83">
    <property type="interactions" value="158"/>
</dbReference>
<dbReference type="STRING" id="56780.SYN_01280"/>
<dbReference type="KEGG" id="sat:SYN_01280"/>
<dbReference type="eggNOG" id="COG1758">
    <property type="taxonomic scope" value="Bacteria"/>
</dbReference>
<dbReference type="HOGENOM" id="CLU_2425881_0_0_7"/>
<dbReference type="InParanoid" id="Q2LQ83"/>
<dbReference type="OrthoDB" id="9796300at2"/>
<dbReference type="Proteomes" id="UP000001933">
    <property type="component" value="Chromosome"/>
</dbReference>
<dbReference type="GO" id="GO:0000428">
    <property type="term" value="C:DNA-directed RNA polymerase complex"/>
    <property type="evidence" value="ECO:0007669"/>
    <property type="project" value="UniProtKB-KW"/>
</dbReference>
<dbReference type="GO" id="GO:0003677">
    <property type="term" value="F:DNA binding"/>
    <property type="evidence" value="ECO:0007669"/>
    <property type="project" value="UniProtKB-UniRule"/>
</dbReference>
<dbReference type="GO" id="GO:0003899">
    <property type="term" value="F:DNA-directed RNA polymerase activity"/>
    <property type="evidence" value="ECO:0007669"/>
    <property type="project" value="UniProtKB-UniRule"/>
</dbReference>
<dbReference type="GO" id="GO:0006351">
    <property type="term" value="P:DNA-templated transcription"/>
    <property type="evidence" value="ECO:0007669"/>
    <property type="project" value="UniProtKB-UniRule"/>
</dbReference>
<dbReference type="Gene3D" id="3.90.940.10">
    <property type="match status" value="1"/>
</dbReference>
<dbReference type="HAMAP" id="MF_00366">
    <property type="entry name" value="RNApol_bact_RpoZ"/>
    <property type="match status" value="1"/>
</dbReference>
<dbReference type="InterPro" id="IPR003716">
    <property type="entry name" value="DNA-dir_RNA_pol_omega"/>
</dbReference>
<dbReference type="InterPro" id="IPR006110">
    <property type="entry name" value="Pol_omega/Rpo6/RPB6"/>
</dbReference>
<dbReference type="InterPro" id="IPR036161">
    <property type="entry name" value="RPB6/omega-like_sf"/>
</dbReference>
<dbReference type="NCBIfam" id="TIGR00690">
    <property type="entry name" value="rpoZ"/>
    <property type="match status" value="1"/>
</dbReference>
<dbReference type="PANTHER" id="PTHR34476">
    <property type="entry name" value="DNA-DIRECTED RNA POLYMERASE SUBUNIT OMEGA"/>
    <property type="match status" value="1"/>
</dbReference>
<dbReference type="PANTHER" id="PTHR34476:SF1">
    <property type="entry name" value="DNA-DIRECTED RNA POLYMERASE SUBUNIT OMEGA"/>
    <property type="match status" value="1"/>
</dbReference>
<dbReference type="Pfam" id="PF01192">
    <property type="entry name" value="RNA_pol_Rpb6"/>
    <property type="match status" value="1"/>
</dbReference>
<dbReference type="SMART" id="SM01409">
    <property type="entry name" value="RNA_pol_Rpb6"/>
    <property type="match status" value="1"/>
</dbReference>
<dbReference type="SUPFAM" id="SSF63562">
    <property type="entry name" value="RPB6/omega subunit-like"/>
    <property type="match status" value="1"/>
</dbReference>
<accession>Q2LQ83</accession>
<feature type="chain" id="PRO_0000237522" description="DNA-directed RNA polymerase subunit omega">
    <location>
        <begin position="1"/>
        <end position="91"/>
    </location>
</feature>
<comment type="function">
    <text evidence="1">Promotes RNA polymerase assembly. Latches the N- and C-terminal regions of the beta' subunit thereby facilitating its interaction with the beta and alpha subunits.</text>
</comment>
<comment type="catalytic activity">
    <reaction evidence="1">
        <text>RNA(n) + a ribonucleoside 5'-triphosphate = RNA(n+1) + diphosphate</text>
        <dbReference type="Rhea" id="RHEA:21248"/>
        <dbReference type="Rhea" id="RHEA-COMP:14527"/>
        <dbReference type="Rhea" id="RHEA-COMP:17342"/>
        <dbReference type="ChEBI" id="CHEBI:33019"/>
        <dbReference type="ChEBI" id="CHEBI:61557"/>
        <dbReference type="ChEBI" id="CHEBI:140395"/>
        <dbReference type="EC" id="2.7.7.6"/>
    </reaction>
</comment>
<comment type="subunit">
    <text evidence="1">The RNAP catalytic core consists of 2 alpha, 1 beta, 1 beta' and 1 omega subunit. When a sigma factor is associated with the core the holoenzyme is formed, which can initiate transcription.</text>
</comment>
<comment type="similarity">
    <text evidence="1">Belongs to the RNA polymerase subunit omega family.</text>
</comment>
<name>RPOZ_SYNAS</name>